<dbReference type="EC" id="2.7.1.24" evidence="1"/>
<dbReference type="EMBL" id="CP000023">
    <property type="protein sequence ID" value="AAV60327.1"/>
    <property type="status" value="ALT_INIT"/>
    <property type="molecule type" value="Genomic_DNA"/>
</dbReference>
<dbReference type="RefSeq" id="WP_014621355.1">
    <property type="nucleotide sequence ID" value="NC_006448.1"/>
</dbReference>
<dbReference type="SMR" id="Q5M575"/>
<dbReference type="STRING" id="264199.stu0621"/>
<dbReference type="GeneID" id="66898528"/>
<dbReference type="KEGG" id="stl:stu0621"/>
<dbReference type="eggNOG" id="COG0237">
    <property type="taxonomic scope" value="Bacteria"/>
</dbReference>
<dbReference type="HOGENOM" id="CLU_057180_0_0_9"/>
<dbReference type="UniPathway" id="UPA00241">
    <property type="reaction ID" value="UER00356"/>
</dbReference>
<dbReference type="Proteomes" id="UP000001170">
    <property type="component" value="Chromosome"/>
</dbReference>
<dbReference type="GO" id="GO:0005737">
    <property type="term" value="C:cytoplasm"/>
    <property type="evidence" value="ECO:0007669"/>
    <property type="project" value="UniProtKB-SubCell"/>
</dbReference>
<dbReference type="GO" id="GO:0005524">
    <property type="term" value="F:ATP binding"/>
    <property type="evidence" value="ECO:0007669"/>
    <property type="project" value="UniProtKB-UniRule"/>
</dbReference>
<dbReference type="GO" id="GO:0004140">
    <property type="term" value="F:dephospho-CoA kinase activity"/>
    <property type="evidence" value="ECO:0007669"/>
    <property type="project" value="UniProtKB-UniRule"/>
</dbReference>
<dbReference type="GO" id="GO:0015937">
    <property type="term" value="P:coenzyme A biosynthetic process"/>
    <property type="evidence" value="ECO:0007669"/>
    <property type="project" value="UniProtKB-UniRule"/>
</dbReference>
<dbReference type="CDD" id="cd02022">
    <property type="entry name" value="DPCK"/>
    <property type="match status" value="1"/>
</dbReference>
<dbReference type="FunFam" id="3.40.50.300:FF:000991">
    <property type="entry name" value="Dephospho-CoA kinase"/>
    <property type="match status" value="1"/>
</dbReference>
<dbReference type="Gene3D" id="3.40.50.300">
    <property type="entry name" value="P-loop containing nucleotide triphosphate hydrolases"/>
    <property type="match status" value="1"/>
</dbReference>
<dbReference type="HAMAP" id="MF_00376">
    <property type="entry name" value="Dephospho_CoA_kinase"/>
    <property type="match status" value="1"/>
</dbReference>
<dbReference type="InterPro" id="IPR001977">
    <property type="entry name" value="Depp_CoAkinase"/>
</dbReference>
<dbReference type="InterPro" id="IPR027417">
    <property type="entry name" value="P-loop_NTPase"/>
</dbReference>
<dbReference type="NCBIfam" id="TIGR00152">
    <property type="entry name" value="dephospho-CoA kinase"/>
    <property type="match status" value="1"/>
</dbReference>
<dbReference type="PANTHER" id="PTHR10695:SF46">
    <property type="entry name" value="BIFUNCTIONAL COENZYME A SYNTHASE-RELATED"/>
    <property type="match status" value="1"/>
</dbReference>
<dbReference type="PANTHER" id="PTHR10695">
    <property type="entry name" value="DEPHOSPHO-COA KINASE-RELATED"/>
    <property type="match status" value="1"/>
</dbReference>
<dbReference type="Pfam" id="PF01121">
    <property type="entry name" value="CoaE"/>
    <property type="match status" value="1"/>
</dbReference>
<dbReference type="SUPFAM" id="SSF52540">
    <property type="entry name" value="P-loop containing nucleoside triphosphate hydrolases"/>
    <property type="match status" value="1"/>
</dbReference>
<dbReference type="PROSITE" id="PS51219">
    <property type="entry name" value="DPCK"/>
    <property type="match status" value="1"/>
</dbReference>
<proteinExistence type="inferred from homology"/>
<accession>Q5M575</accession>
<keyword id="KW-0067">ATP-binding</keyword>
<keyword id="KW-0173">Coenzyme A biosynthesis</keyword>
<keyword id="KW-0963">Cytoplasm</keyword>
<keyword id="KW-0418">Kinase</keyword>
<keyword id="KW-0547">Nucleotide-binding</keyword>
<keyword id="KW-1185">Reference proteome</keyword>
<keyword id="KW-0808">Transferase</keyword>
<feature type="chain" id="PRO_0000243348" description="Dephospho-CoA kinase">
    <location>
        <begin position="1"/>
        <end position="197"/>
    </location>
</feature>
<feature type="domain" description="DPCK" evidence="1">
    <location>
        <begin position="2"/>
        <end position="197"/>
    </location>
</feature>
<feature type="binding site" evidence="1">
    <location>
        <begin position="10"/>
        <end position="15"/>
    </location>
    <ligand>
        <name>ATP</name>
        <dbReference type="ChEBI" id="CHEBI:30616"/>
    </ligand>
</feature>
<organism>
    <name type="scientific">Streptococcus thermophilus (strain ATCC BAA-250 / LMG 18311)</name>
    <dbReference type="NCBI Taxonomy" id="264199"/>
    <lineage>
        <taxon>Bacteria</taxon>
        <taxon>Bacillati</taxon>
        <taxon>Bacillota</taxon>
        <taxon>Bacilli</taxon>
        <taxon>Lactobacillales</taxon>
        <taxon>Streptococcaceae</taxon>
        <taxon>Streptococcus</taxon>
    </lineage>
</organism>
<reference key="1">
    <citation type="journal article" date="2004" name="Nat. Biotechnol.">
        <title>Complete sequence and comparative genome analysis of the dairy bacterium Streptococcus thermophilus.</title>
        <authorList>
            <person name="Bolotin A."/>
            <person name="Quinquis B."/>
            <person name="Renault P."/>
            <person name="Sorokin A."/>
            <person name="Ehrlich S.D."/>
            <person name="Kulakauskas S."/>
            <person name="Lapidus A."/>
            <person name="Goltsman E."/>
            <person name="Mazur M."/>
            <person name="Pusch G.D."/>
            <person name="Fonstein M."/>
            <person name="Overbeek R."/>
            <person name="Kyprides N."/>
            <person name="Purnelle B."/>
            <person name="Prozzi D."/>
            <person name="Ngui K."/>
            <person name="Masuy D."/>
            <person name="Hancy F."/>
            <person name="Burteau S."/>
            <person name="Boutry M."/>
            <person name="Delcour J."/>
            <person name="Goffeau A."/>
            <person name="Hols P."/>
        </authorList>
    </citation>
    <scope>NUCLEOTIDE SEQUENCE [LARGE SCALE GENOMIC DNA]</scope>
    <source>
        <strain>ATCC BAA-250 / LMG 18311</strain>
    </source>
</reference>
<gene>
    <name evidence="1" type="primary">coaE</name>
    <name type="ordered locus">stu0621</name>
</gene>
<name>COAE_STRT2</name>
<evidence type="ECO:0000255" key="1">
    <source>
        <dbReference type="HAMAP-Rule" id="MF_00376"/>
    </source>
</evidence>
<evidence type="ECO:0000305" key="2"/>
<sequence>MIIGLTGGIASGKSTVVEIIKDAGYKVIDADQLVHDMQVKGGRLYQALLDWLGDGILLPNGELNRPKLGQLIFSSEEMRYQSAEIQGKIIREELAAKRDCLAKEEDVFFMDIPLLFENDYQDWFDQIWLVAVSPQVQGQRLMKRNHLSAEEAGMRIASQMPLAEKLPYASLVIDNNGNIDDLKKKVKGAIKDLANLV</sequence>
<comment type="function">
    <text evidence="1">Catalyzes the phosphorylation of the 3'-hydroxyl group of dephosphocoenzyme A to form coenzyme A.</text>
</comment>
<comment type="catalytic activity">
    <reaction evidence="1">
        <text>3'-dephospho-CoA + ATP = ADP + CoA + H(+)</text>
        <dbReference type="Rhea" id="RHEA:18245"/>
        <dbReference type="ChEBI" id="CHEBI:15378"/>
        <dbReference type="ChEBI" id="CHEBI:30616"/>
        <dbReference type="ChEBI" id="CHEBI:57287"/>
        <dbReference type="ChEBI" id="CHEBI:57328"/>
        <dbReference type="ChEBI" id="CHEBI:456216"/>
        <dbReference type="EC" id="2.7.1.24"/>
    </reaction>
</comment>
<comment type="pathway">
    <text evidence="1">Cofactor biosynthesis; coenzyme A biosynthesis; CoA from (R)-pantothenate: step 5/5.</text>
</comment>
<comment type="subcellular location">
    <subcellularLocation>
        <location evidence="1">Cytoplasm</location>
    </subcellularLocation>
</comment>
<comment type="similarity">
    <text evidence="1">Belongs to the CoaE family.</text>
</comment>
<comment type="sequence caution" evidence="2">
    <conflict type="erroneous initiation">
        <sequence resource="EMBL-CDS" id="AAV60327"/>
    </conflict>
</comment>
<protein>
    <recommendedName>
        <fullName evidence="1">Dephospho-CoA kinase</fullName>
        <ecNumber evidence="1">2.7.1.24</ecNumber>
    </recommendedName>
    <alternativeName>
        <fullName evidence="1">Dephosphocoenzyme A kinase</fullName>
    </alternativeName>
</protein>